<name>EFTS_CLOBB</name>
<keyword id="KW-0963">Cytoplasm</keyword>
<keyword id="KW-0251">Elongation factor</keyword>
<keyword id="KW-0648">Protein biosynthesis</keyword>
<accession>B2TJ41</accession>
<sequence>MISAKSVKELRERTGAGMMDCKKALTETDGDIEKAVEVLREKGLAAAAKKSGRVAAEGLVKTYISEDKKSGAIVELNCETDFVAANEDFIAFADALAKIATSTSATTVEELVNEKFDSEATIQEALTGLIARLGENMTVRRFVKFAVDNGVVKSYIHGGGRIGVLVEVACDVESPAVEEVAKELCMQIAAANPLFLSKEEVDQDSIEKEKEIYRVQALNEGKPEKIVEKMVMGRIQKYYKEVCLLEQLWVKDGDKTITKFIDEKAKEAGSAIKVNRFVRFERGEGIEKVEENFAEEVAKQLGK</sequence>
<dbReference type="EMBL" id="CP001056">
    <property type="protein sequence ID" value="ACD25047.1"/>
    <property type="molecule type" value="Genomic_DNA"/>
</dbReference>
<dbReference type="SMR" id="B2TJ41"/>
<dbReference type="KEGG" id="cbk:CLL_A1259"/>
<dbReference type="PATRIC" id="fig|935198.13.peg.1205"/>
<dbReference type="HOGENOM" id="CLU_047155_0_0_9"/>
<dbReference type="Proteomes" id="UP000001195">
    <property type="component" value="Chromosome"/>
</dbReference>
<dbReference type="GO" id="GO:0005737">
    <property type="term" value="C:cytoplasm"/>
    <property type="evidence" value="ECO:0007669"/>
    <property type="project" value="UniProtKB-SubCell"/>
</dbReference>
<dbReference type="GO" id="GO:0003746">
    <property type="term" value="F:translation elongation factor activity"/>
    <property type="evidence" value="ECO:0007669"/>
    <property type="project" value="UniProtKB-UniRule"/>
</dbReference>
<dbReference type="CDD" id="cd14275">
    <property type="entry name" value="UBA_EF-Ts"/>
    <property type="match status" value="1"/>
</dbReference>
<dbReference type="FunFam" id="1.10.286.20:FF:000001">
    <property type="entry name" value="Elongation factor Ts"/>
    <property type="match status" value="1"/>
</dbReference>
<dbReference type="FunFam" id="1.10.8.10:FF:000001">
    <property type="entry name" value="Elongation factor Ts"/>
    <property type="match status" value="1"/>
</dbReference>
<dbReference type="Gene3D" id="1.10.286.20">
    <property type="match status" value="1"/>
</dbReference>
<dbReference type="Gene3D" id="1.10.8.10">
    <property type="entry name" value="DNA helicase RuvA subunit, C-terminal domain"/>
    <property type="match status" value="1"/>
</dbReference>
<dbReference type="Gene3D" id="3.30.479.20">
    <property type="entry name" value="Elongation factor Ts, dimerisation domain"/>
    <property type="match status" value="2"/>
</dbReference>
<dbReference type="HAMAP" id="MF_00050">
    <property type="entry name" value="EF_Ts"/>
    <property type="match status" value="1"/>
</dbReference>
<dbReference type="InterPro" id="IPR036402">
    <property type="entry name" value="EF-Ts_dimer_sf"/>
</dbReference>
<dbReference type="InterPro" id="IPR001816">
    <property type="entry name" value="Transl_elong_EFTs/EF1B"/>
</dbReference>
<dbReference type="InterPro" id="IPR014039">
    <property type="entry name" value="Transl_elong_EFTs/EF1B_dimer"/>
</dbReference>
<dbReference type="InterPro" id="IPR018101">
    <property type="entry name" value="Transl_elong_Ts_CS"/>
</dbReference>
<dbReference type="InterPro" id="IPR009060">
    <property type="entry name" value="UBA-like_sf"/>
</dbReference>
<dbReference type="NCBIfam" id="TIGR00116">
    <property type="entry name" value="tsf"/>
    <property type="match status" value="1"/>
</dbReference>
<dbReference type="PANTHER" id="PTHR11741">
    <property type="entry name" value="ELONGATION FACTOR TS"/>
    <property type="match status" value="1"/>
</dbReference>
<dbReference type="PANTHER" id="PTHR11741:SF0">
    <property type="entry name" value="ELONGATION FACTOR TS, MITOCHONDRIAL"/>
    <property type="match status" value="1"/>
</dbReference>
<dbReference type="Pfam" id="PF00889">
    <property type="entry name" value="EF_TS"/>
    <property type="match status" value="1"/>
</dbReference>
<dbReference type="SUPFAM" id="SSF54713">
    <property type="entry name" value="Elongation factor Ts (EF-Ts), dimerisation domain"/>
    <property type="match status" value="2"/>
</dbReference>
<dbReference type="SUPFAM" id="SSF46934">
    <property type="entry name" value="UBA-like"/>
    <property type="match status" value="1"/>
</dbReference>
<dbReference type="PROSITE" id="PS01126">
    <property type="entry name" value="EF_TS_1"/>
    <property type="match status" value="1"/>
</dbReference>
<dbReference type="PROSITE" id="PS01127">
    <property type="entry name" value="EF_TS_2"/>
    <property type="match status" value="1"/>
</dbReference>
<evidence type="ECO:0000255" key="1">
    <source>
        <dbReference type="HAMAP-Rule" id="MF_00050"/>
    </source>
</evidence>
<proteinExistence type="inferred from homology"/>
<comment type="function">
    <text evidence="1">Associates with the EF-Tu.GDP complex and induces the exchange of GDP to GTP. It remains bound to the aminoacyl-tRNA.EF-Tu.GTP complex up to the GTP hydrolysis stage on the ribosome.</text>
</comment>
<comment type="subcellular location">
    <subcellularLocation>
        <location evidence="1">Cytoplasm</location>
    </subcellularLocation>
</comment>
<comment type="similarity">
    <text evidence="1">Belongs to the EF-Ts family.</text>
</comment>
<organism>
    <name type="scientific">Clostridium botulinum (strain Eklund 17B / Type B)</name>
    <dbReference type="NCBI Taxonomy" id="935198"/>
    <lineage>
        <taxon>Bacteria</taxon>
        <taxon>Bacillati</taxon>
        <taxon>Bacillota</taxon>
        <taxon>Clostridia</taxon>
        <taxon>Eubacteriales</taxon>
        <taxon>Clostridiaceae</taxon>
        <taxon>Clostridium</taxon>
    </lineage>
</organism>
<gene>
    <name evidence="1" type="primary">tsf</name>
    <name type="ordered locus">CLL_A1259</name>
</gene>
<protein>
    <recommendedName>
        <fullName evidence="1">Elongation factor Ts</fullName>
        <shortName evidence="1">EF-Ts</shortName>
    </recommendedName>
</protein>
<reference key="1">
    <citation type="submission" date="2008-04" db="EMBL/GenBank/DDBJ databases">
        <title>Complete sequence of Clostridium botulinum strain Eklund.</title>
        <authorList>
            <person name="Brinkac L.M."/>
            <person name="Brown J.L."/>
            <person name="Bruce D."/>
            <person name="Detter C."/>
            <person name="Munk C."/>
            <person name="Smith L.A."/>
            <person name="Smith T.J."/>
            <person name="Sutton G."/>
            <person name="Brettin T.S."/>
        </authorList>
    </citation>
    <scope>NUCLEOTIDE SEQUENCE [LARGE SCALE GENOMIC DNA]</scope>
    <source>
        <strain>Eklund 17B / Type B</strain>
    </source>
</reference>
<feature type="chain" id="PRO_1000116715" description="Elongation factor Ts">
    <location>
        <begin position="1"/>
        <end position="303"/>
    </location>
</feature>
<feature type="region of interest" description="Involved in Mg(2+) ion dislocation from EF-Tu" evidence="1">
    <location>
        <begin position="80"/>
        <end position="83"/>
    </location>
</feature>